<reference key="1">
    <citation type="journal article" date="2003" name="Proc. Natl. Acad. Sci. U.S.A.">
        <title>The complete genome sequence of Mycobacterium bovis.</title>
        <authorList>
            <person name="Garnier T."/>
            <person name="Eiglmeier K."/>
            <person name="Camus J.-C."/>
            <person name="Medina N."/>
            <person name="Mansoor H."/>
            <person name="Pryor M."/>
            <person name="Duthoy S."/>
            <person name="Grondin S."/>
            <person name="Lacroix C."/>
            <person name="Monsempe C."/>
            <person name="Simon S."/>
            <person name="Harris B."/>
            <person name="Atkin R."/>
            <person name="Doggett J."/>
            <person name="Mayes R."/>
            <person name="Keating L."/>
            <person name="Wheeler P.R."/>
            <person name="Parkhill J."/>
            <person name="Barrell B.G."/>
            <person name="Cole S.T."/>
            <person name="Gordon S.V."/>
            <person name="Hewinson R.G."/>
        </authorList>
    </citation>
    <scope>NUCLEOTIDE SEQUENCE [LARGE SCALE GENOMIC DNA]</scope>
    <source>
        <strain>ATCC BAA-935 / AF2122/97</strain>
    </source>
</reference>
<reference key="2">
    <citation type="journal article" date="2017" name="Genome Announc.">
        <title>Updated reference genome sequence and annotation of Mycobacterium bovis AF2122/97.</title>
        <authorList>
            <person name="Malone K.M."/>
            <person name="Farrell D."/>
            <person name="Stuber T.P."/>
            <person name="Schubert O.T."/>
            <person name="Aebersold R."/>
            <person name="Robbe-Austerman S."/>
            <person name="Gordon S.V."/>
        </authorList>
    </citation>
    <scope>NUCLEOTIDE SEQUENCE [LARGE SCALE GENOMIC DNA]</scope>
    <scope>GENOME REANNOTATION</scope>
    <source>
        <strain>ATCC BAA-935 / AF2122/97</strain>
    </source>
</reference>
<name>DHPS2_MYCBO</name>
<sequence>MRSTPPASAGRSTPPALAGHSTPPALAGHSTLCGRPVAGDRALIMAIVNRTPDSFYDKGATFSDAAARDAVHRAVADGADVIDVGGVKAGPGERVDVDTEITRLVPFIEWLRGAYPDQLISVDTWRAQVAKAACAAGADLINDTWGGVDPAMPEVAAEFGAGLVCAHTGGALPRTRPFRVSYGTTTRGVVDAVISQVTAAAERAVAAGVAREKVLIDPAHDFGKNTFHGLLLLRHVADLVMTGWPVLMALSNKDVVGETLGVDLTERLEGTLAATALAAAAGARMFRVHEVAATRRVLEMVASIQGVRPPTRTVRGLA</sequence>
<comment type="function">
    <text evidence="1">Has very low affinity for the DHPS substrate 6-hydroxymethyl-7,8-dihydropterin-pyrophosphate, but can bind the inhibitor dapsone. Seems to lack dihydropteroate synthase activity, and does probably not function in folate metabolism (By similarity).</text>
</comment>
<comment type="subunit">
    <text evidence="1">Homodimer.</text>
</comment>
<comment type="similarity">
    <text evidence="4">Belongs to the DHPS family.</text>
</comment>
<organism>
    <name type="scientific">Mycobacterium bovis (strain ATCC BAA-935 / AF2122/97)</name>
    <dbReference type="NCBI Taxonomy" id="233413"/>
    <lineage>
        <taxon>Bacteria</taxon>
        <taxon>Bacillati</taxon>
        <taxon>Actinomycetota</taxon>
        <taxon>Actinomycetes</taxon>
        <taxon>Mycobacteriales</taxon>
        <taxon>Mycobacteriaceae</taxon>
        <taxon>Mycobacterium</taxon>
        <taxon>Mycobacterium tuberculosis complex</taxon>
    </lineage>
</organism>
<proteinExistence type="inferred from homology"/>
<keyword id="KW-1185">Reference proteome</keyword>
<dbReference type="EMBL" id="LT708304">
    <property type="protein sequence ID" value="SIT99840.1"/>
    <property type="molecule type" value="Genomic_DNA"/>
</dbReference>
<dbReference type="RefSeq" id="NP_854893.1">
    <property type="nucleotide sequence ID" value="NC_002945.3"/>
</dbReference>
<dbReference type="SMR" id="P64140"/>
<dbReference type="KEGG" id="mbo:BQ2027_MB1239"/>
<dbReference type="PATRIC" id="fig|233413.5.peg.1359"/>
<dbReference type="Proteomes" id="UP000001419">
    <property type="component" value="Chromosome"/>
</dbReference>
<dbReference type="GO" id="GO:0005829">
    <property type="term" value="C:cytosol"/>
    <property type="evidence" value="ECO:0007669"/>
    <property type="project" value="TreeGrafter"/>
</dbReference>
<dbReference type="GO" id="GO:0004156">
    <property type="term" value="F:dihydropteroate synthase activity"/>
    <property type="evidence" value="ECO:0007669"/>
    <property type="project" value="InterPro"/>
</dbReference>
<dbReference type="GO" id="GO:0009396">
    <property type="term" value="P:folic acid-containing compound biosynthetic process"/>
    <property type="evidence" value="ECO:0007669"/>
    <property type="project" value="InterPro"/>
</dbReference>
<dbReference type="CDD" id="cd00739">
    <property type="entry name" value="DHPS"/>
    <property type="match status" value="1"/>
</dbReference>
<dbReference type="FunFam" id="3.20.20.20:FF:000008">
    <property type="entry name" value="Dihydropteroate synthase"/>
    <property type="match status" value="1"/>
</dbReference>
<dbReference type="Gene3D" id="3.20.20.20">
    <property type="entry name" value="Dihydropteroate synthase-like"/>
    <property type="match status" value="1"/>
</dbReference>
<dbReference type="InterPro" id="IPR045031">
    <property type="entry name" value="DHP_synth-like"/>
</dbReference>
<dbReference type="InterPro" id="IPR006390">
    <property type="entry name" value="DHP_synth_dom"/>
</dbReference>
<dbReference type="InterPro" id="IPR011005">
    <property type="entry name" value="Dihydropteroate_synth-like_sf"/>
</dbReference>
<dbReference type="InterPro" id="IPR000489">
    <property type="entry name" value="Pterin-binding_dom"/>
</dbReference>
<dbReference type="NCBIfam" id="TIGR01496">
    <property type="entry name" value="DHPS"/>
    <property type="match status" value="1"/>
</dbReference>
<dbReference type="PANTHER" id="PTHR20941">
    <property type="entry name" value="FOLATE SYNTHESIS PROTEINS"/>
    <property type="match status" value="1"/>
</dbReference>
<dbReference type="PANTHER" id="PTHR20941:SF8">
    <property type="entry name" value="INACTIVE DIHYDROPTEROATE SYNTHASE 2"/>
    <property type="match status" value="1"/>
</dbReference>
<dbReference type="Pfam" id="PF00809">
    <property type="entry name" value="Pterin_bind"/>
    <property type="match status" value="1"/>
</dbReference>
<dbReference type="SUPFAM" id="SSF51717">
    <property type="entry name" value="Dihydropteroate synthetase-like"/>
    <property type="match status" value="1"/>
</dbReference>
<dbReference type="PROSITE" id="PS00792">
    <property type="entry name" value="DHPS_1"/>
    <property type="match status" value="1"/>
</dbReference>
<dbReference type="PROSITE" id="PS00793">
    <property type="entry name" value="DHPS_2"/>
    <property type="match status" value="1"/>
</dbReference>
<dbReference type="PROSITE" id="PS50972">
    <property type="entry name" value="PTERIN_BINDING"/>
    <property type="match status" value="1"/>
</dbReference>
<evidence type="ECO:0000250" key="1"/>
<evidence type="ECO:0000255" key="2">
    <source>
        <dbReference type="PROSITE-ProRule" id="PRU00334"/>
    </source>
</evidence>
<evidence type="ECO:0000256" key="3">
    <source>
        <dbReference type="SAM" id="MobiDB-lite"/>
    </source>
</evidence>
<evidence type="ECO:0000305" key="4"/>
<accession>P64140</accession>
<accession>A0A1R3XXN2</accession>
<accession>O05308</accession>
<accession>X2BHD4</accession>
<protein>
    <recommendedName>
        <fullName>Inactive dihydropteroate synthase 2</fullName>
        <shortName>DHPS 2</shortName>
    </recommendedName>
    <alternativeName>
        <fullName>Dihydropteroate pyrophosphorylase 2</fullName>
    </alternativeName>
</protein>
<gene>
    <name type="primary">folP2</name>
    <name type="ordered locus">BQ2027_MB1239</name>
</gene>
<feature type="chain" id="PRO_0000168212" description="Inactive dihydropteroate synthase 2">
    <location>
        <begin position="1"/>
        <end position="318"/>
    </location>
</feature>
<feature type="domain" description="Pterin-binding" evidence="2">
    <location>
        <begin position="42"/>
        <end position="299"/>
    </location>
</feature>
<feature type="region of interest" description="Disordered" evidence="3">
    <location>
        <begin position="1"/>
        <end position="25"/>
    </location>
</feature>
<feature type="site" description="Characteristic for family members without dihydropteroate synthase activity" evidence="1">
    <location>
        <position position="220"/>
    </location>
</feature>